<dbReference type="EC" id="2.4.2.18" evidence="1"/>
<dbReference type="EMBL" id="CP000606">
    <property type="protein sequence ID" value="ABO24119.1"/>
    <property type="molecule type" value="Genomic_DNA"/>
</dbReference>
<dbReference type="RefSeq" id="WP_011866051.1">
    <property type="nucleotide sequence ID" value="NC_009092.1"/>
</dbReference>
<dbReference type="SMR" id="A3QF71"/>
<dbReference type="STRING" id="323850.Shew_2253"/>
<dbReference type="KEGG" id="slo:Shew_2253"/>
<dbReference type="eggNOG" id="COG0547">
    <property type="taxonomic scope" value="Bacteria"/>
</dbReference>
<dbReference type="HOGENOM" id="CLU_034315_2_1_6"/>
<dbReference type="UniPathway" id="UPA00035">
    <property type="reaction ID" value="UER00041"/>
</dbReference>
<dbReference type="Proteomes" id="UP000001558">
    <property type="component" value="Chromosome"/>
</dbReference>
<dbReference type="GO" id="GO:0005829">
    <property type="term" value="C:cytosol"/>
    <property type="evidence" value="ECO:0007669"/>
    <property type="project" value="TreeGrafter"/>
</dbReference>
<dbReference type="GO" id="GO:0004048">
    <property type="term" value="F:anthranilate phosphoribosyltransferase activity"/>
    <property type="evidence" value="ECO:0007669"/>
    <property type="project" value="UniProtKB-UniRule"/>
</dbReference>
<dbReference type="GO" id="GO:0000287">
    <property type="term" value="F:magnesium ion binding"/>
    <property type="evidence" value="ECO:0007669"/>
    <property type="project" value="UniProtKB-UniRule"/>
</dbReference>
<dbReference type="GO" id="GO:0000162">
    <property type="term" value="P:L-tryptophan biosynthetic process"/>
    <property type="evidence" value="ECO:0007669"/>
    <property type="project" value="UniProtKB-UniRule"/>
</dbReference>
<dbReference type="FunFam" id="3.40.1030.10:FF:000002">
    <property type="entry name" value="Anthranilate phosphoribosyltransferase"/>
    <property type="match status" value="1"/>
</dbReference>
<dbReference type="Gene3D" id="3.40.1030.10">
    <property type="entry name" value="Nucleoside phosphorylase/phosphoribosyltransferase catalytic domain"/>
    <property type="match status" value="1"/>
</dbReference>
<dbReference type="Gene3D" id="1.20.970.10">
    <property type="entry name" value="Transferase, Pyrimidine Nucleoside Phosphorylase, Chain C"/>
    <property type="match status" value="1"/>
</dbReference>
<dbReference type="HAMAP" id="MF_00211">
    <property type="entry name" value="TrpD"/>
    <property type="match status" value="1"/>
</dbReference>
<dbReference type="InterPro" id="IPR005940">
    <property type="entry name" value="Anthranilate_Pribosyl_Tfrase"/>
</dbReference>
<dbReference type="InterPro" id="IPR000312">
    <property type="entry name" value="Glycosyl_Trfase_fam3"/>
</dbReference>
<dbReference type="InterPro" id="IPR017459">
    <property type="entry name" value="Glycosyl_Trfase_fam3_N_dom"/>
</dbReference>
<dbReference type="InterPro" id="IPR036320">
    <property type="entry name" value="Glycosyl_Trfase_fam3_N_dom_sf"/>
</dbReference>
<dbReference type="InterPro" id="IPR035902">
    <property type="entry name" value="Nuc_phospho_transferase"/>
</dbReference>
<dbReference type="NCBIfam" id="TIGR01245">
    <property type="entry name" value="trpD"/>
    <property type="match status" value="1"/>
</dbReference>
<dbReference type="PANTHER" id="PTHR43285">
    <property type="entry name" value="ANTHRANILATE PHOSPHORIBOSYLTRANSFERASE"/>
    <property type="match status" value="1"/>
</dbReference>
<dbReference type="PANTHER" id="PTHR43285:SF2">
    <property type="entry name" value="ANTHRANILATE PHOSPHORIBOSYLTRANSFERASE"/>
    <property type="match status" value="1"/>
</dbReference>
<dbReference type="Pfam" id="PF02885">
    <property type="entry name" value="Glycos_trans_3N"/>
    <property type="match status" value="1"/>
</dbReference>
<dbReference type="Pfam" id="PF00591">
    <property type="entry name" value="Glycos_transf_3"/>
    <property type="match status" value="1"/>
</dbReference>
<dbReference type="SUPFAM" id="SSF52418">
    <property type="entry name" value="Nucleoside phosphorylase/phosphoribosyltransferase catalytic domain"/>
    <property type="match status" value="1"/>
</dbReference>
<dbReference type="SUPFAM" id="SSF47648">
    <property type="entry name" value="Nucleoside phosphorylase/phosphoribosyltransferase N-terminal domain"/>
    <property type="match status" value="1"/>
</dbReference>
<gene>
    <name evidence="1" type="primary">trpD</name>
    <name type="ordered locus">Shew_2253</name>
</gene>
<comment type="function">
    <text evidence="1">Catalyzes the transfer of the phosphoribosyl group of 5-phosphorylribose-1-pyrophosphate (PRPP) to anthranilate to yield N-(5'-phosphoribosyl)-anthranilate (PRA).</text>
</comment>
<comment type="catalytic activity">
    <reaction evidence="1">
        <text>N-(5-phospho-beta-D-ribosyl)anthranilate + diphosphate = 5-phospho-alpha-D-ribose 1-diphosphate + anthranilate</text>
        <dbReference type="Rhea" id="RHEA:11768"/>
        <dbReference type="ChEBI" id="CHEBI:16567"/>
        <dbReference type="ChEBI" id="CHEBI:18277"/>
        <dbReference type="ChEBI" id="CHEBI:33019"/>
        <dbReference type="ChEBI" id="CHEBI:58017"/>
        <dbReference type="EC" id="2.4.2.18"/>
    </reaction>
</comment>
<comment type="cofactor">
    <cofactor evidence="1">
        <name>Mg(2+)</name>
        <dbReference type="ChEBI" id="CHEBI:18420"/>
    </cofactor>
    <text evidence="1">Binds 2 magnesium ions per monomer.</text>
</comment>
<comment type="pathway">
    <text evidence="1">Amino-acid biosynthesis; L-tryptophan biosynthesis; L-tryptophan from chorismate: step 2/5.</text>
</comment>
<comment type="subunit">
    <text evidence="1">Homodimer.</text>
</comment>
<comment type="similarity">
    <text evidence="1">Belongs to the anthranilate phosphoribosyltransferase family.</text>
</comment>
<protein>
    <recommendedName>
        <fullName evidence="1">Anthranilate phosphoribosyltransferase</fullName>
        <ecNumber evidence="1">2.4.2.18</ecNumber>
    </recommendedName>
</protein>
<feature type="chain" id="PRO_0000325465" description="Anthranilate phosphoribosyltransferase">
    <location>
        <begin position="1"/>
        <end position="349"/>
    </location>
</feature>
<feature type="binding site" evidence="1">
    <location>
        <position position="87"/>
    </location>
    <ligand>
        <name>5-phospho-alpha-D-ribose 1-diphosphate</name>
        <dbReference type="ChEBI" id="CHEBI:58017"/>
    </ligand>
</feature>
<feature type="binding site" evidence="1">
    <location>
        <position position="87"/>
    </location>
    <ligand>
        <name>anthranilate</name>
        <dbReference type="ChEBI" id="CHEBI:16567"/>
        <label>1</label>
    </ligand>
</feature>
<feature type="binding site" evidence="1">
    <location>
        <begin position="90"/>
        <end position="91"/>
    </location>
    <ligand>
        <name>5-phospho-alpha-D-ribose 1-diphosphate</name>
        <dbReference type="ChEBI" id="CHEBI:58017"/>
    </ligand>
</feature>
<feature type="binding site" evidence="1">
    <location>
        <position position="95"/>
    </location>
    <ligand>
        <name>5-phospho-alpha-D-ribose 1-diphosphate</name>
        <dbReference type="ChEBI" id="CHEBI:58017"/>
    </ligand>
</feature>
<feature type="binding site" evidence="1">
    <location>
        <begin position="97"/>
        <end position="100"/>
    </location>
    <ligand>
        <name>5-phospho-alpha-D-ribose 1-diphosphate</name>
        <dbReference type="ChEBI" id="CHEBI:58017"/>
    </ligand>
</feature>
<feature type="binding site" evidence="1">
    <location>
        <position position="99"/>
    </location>
    <ligand>
        <name>Mg(2+)</name>
        <dbReference type="ChEBI" id="CHEBI:18420"/>
        <label>1</label>
    </ligand>
</feature>
<feature type="binding site" evidence="1">
    <location>
        <begin position="115"/>
        <end position="123"/>
    </location>
    <ligand>
        <name>5-phospho-alpha-D-ribose 1-diphosphate</name>
        <dbReference type="ChEBI" id="CHEBI:58017"/>
    </ligand>
</feature>
<feature type="binding site" evidence="1">
    <location>
        <position position="118"/>
    </location>
    <ligand>
        <name>anthranilate</name>
        <dbReference type="ChEBI" id="CHEBI:16567"/>
        <label>1</label>
    </ligand>
</feature>
<feature type="binding site" evidence="1">
    <location>
        <position position="127"/>
    </location>
    <ligand>
        <name>5-phospho-alpha-D-ribose 1-diphosphate</name>
        <dbReference type="ChEBI" id="CHEBI:58017"/>
    </ligand>
</feature>
<feature type="binding site" evidence="1">
    <location>
        <position position="173"/>
    </location>
    <ligand>
        <name>anthranilate</name>
        <dbReference type="ChEBI" id="CHEBI:16567"/>
        <label>2</label>
    </ligand>
</feature>
<feature type="binding site" evidence="1">
    <location>
        <position position="231"/>
    </location>
    <ligand>
        <name>Mg(2+)</name>
        <dbReference type="ChEBI" id="CHEBI:18420"/>
        <label>2</label>
    </ligand>
</feature>
<feature type="binding site" evidence="1">
    <location>
        <position position="232"/>
    </location>
    <ligand>
        <name>Mg(2+)</name>
        <dbReference type="ChEBI" id="CHEBI:18420"/>
        <label>1</label>
    </ligand>
</feature>
<feature type="binding site" evidence="1">
    <location>
        <position position="232"/>
    </location>
    <ligand>
        <name>Mg(2+)</name>
        <dbReference type="ChEBI" id="CHEBI:18420"/>
        <label>2</label>
    </ligand>
</feature>
<name>TRPD_SHELP</name>
<keyword id="KW-0028">Amino-acid biosynthesis</keyword>
<keyword id="KW-0057">Aromatic amino acid biosynthesis</keyword>
<keyword id="KW-0328">Glycosyltransferase</keyword>
<keyword id="KW-0460">Magnesium</keyword>
<keyword id="KW-0479">Metal-binding</keyword>
<keyword id="KW-1185">Reference proteome</keyword>
<keyword id="KW-0808">Transferase</keyword>
<keyword id="KW-0822">Tryptophan biosynthesis</keyword>
<sequence>MSELQPIFDRLYQGQTISREETKALFSEIVEGKMDPVAMAGMLVAMKMRGETIDEISGAADALLQAAKAFPAPSEATRTQGIVDIVGTGGDGHNTINISTTSAFVAAAAGAKVAKHGNRSVSSKSGSSDLLAQFGIDLTMAPETARDCLDDLGLCFLFAPHYHGGVRHAVPVRQALKTRTLFNVLGPLINPARPDYMLLGVYDPMLVRPICDVLKALDVKRAMVVHGSGLDEVAVHGETLVCELKQGEIVEYYLSPEALGLSRAAISDLAGAGPAENAEITRAILQGHGELAHTEAVAANAGCALYVSGCCDSPQQGTALALQTLASGKAYILLQQLASASQSDNLGTN</sequence>
<evidence type="ECO:0000255" key="1">
    <source>
        <dbReference type="HAMAP-Rule" id="MF_00211"/>
    </source>
</evidence>
<reference key="1">
    <citation type="submission" date="2007-03" db="EMBL/GenBank/DDBJ databases">
        <title>Complete sequence of Shewanella loihica PV-4.</title>
        <authorList>
            <consortium name="US DOE Joint Genome Institute"/>
            <person name="Copeland A."/>
            <person name="Lucas S."/>
            <person name="Lapidus A."/>
            <person name="Barry K."/>
            <person name="Detter J.C."/>
            <person name="Glavina del Rio T."/>
            <person name="Hammon N."/>
            <person name="Israni S."/>
            <person name="Dalin E."/>
            <person name="Tice H."/>
            <person name="Pitluck S."/>
            <person name="Chain P."/>
            <person name="Malfatti S."/>
            <person name="Shin M."/>
            <person name="Vergez L."/>
            <person name="Schmutz J."/>
            <person name="Larimer F."/>
            <person name="Land M."/>
            <person name="Hauser L."/>
            <person name="Kyrpides N."/>
            <person name="Mikhailova N."/>
            <person name="Romine M.F."/>
            <person name="Serres G."/>
            <person name="Fredrickson J."/>
            <person name="Tiedje J."/>
            <person name="Richardson P."/>
        </authorList>
    </citation>
    <scope>NUCLEOTIDE SEQUENCE [LARGE SCALE GENOMIC DNA]</scope>
    <source>
        <strain>ATCC BAA-1088 / PV-4</strain>
    </source>
</reference>
<accession>A3QF71</accession>
<organism>
    <name type="scientific">Shewanella loihica (strain ATCC BAA-1088 / PV-4)</name>
    <dbReference type="NCBI Taxonomy" id="323850"/>
    <lineage>
        <taxon>Bacteria</taxon>
        <taxon>Pseudomonadati</taxon>
        <taxon>Pseudomonadota</taxon>
        <taxon>Gammaproteobacteria</taxon>
        <taxon>Alteromonadales</taxon>
        <taxon>Shewanellaceae</taxon>
        <taxon>Shewanella</taxon>
    </lineage>
</organism>
<proteinExistence type="inferred from homology"/>